<dbReference type="EC" id="2.7.11.-" evidence="1"/>
<dbReference type="EC" id="2.7.4.-" evidence="1"/>
<dbReference type="EMBL" id="CP000548">
    <property type="protein sequence ID" value="ABO06375.1"/>
    <property type="molecule type" value="Genomic_DNA"/>
</dbReference>
<dbReference type="RefSeq" id="WP_004195225.1">
    <property type="nucleotide sequence ID" value="NZ_CP007802.1"/>
</dbReference>
<dbReference type="SMR" id="A3MQC3"/>
<dbReference type="GeneID" id="93059051"/>
<dbReference type="KEGG" id="bmaz:BM44_407"/>
<dbReference type="KEGG" id="bmn:BMA10247_2939"/>
<dbReference type="PATRIC" id="fig|320389.8.peg.449"/>
<dbReference type="GO" id="GO:0005524">
    <property type="term" value="F:ATP binding"/>
    <property type="evidence" value="ECO:0007669"/>
    <property type="project" value="UniProtKB-UniRule"/>
</dbReference>
<dbReference type="GO" id="GO:0000287">
    <property type="term" value="F:magnesium ion binding"/>
    <property type="evidence" value="ECO:0007669"/>
    <property type="project" value="UniProtKB-UniRule"/>
</dbReference>
<dbReference type="GO" id="GO:0000155">
    <property type="term" value="F:phosphorelay sensor kinase activity"/>
    <property type="evidence" value="ECO:0007669"/>
    <property type="project" value="InterPro"/>
</dbReference>
<dbReference type="GO" id="GO:0004674">
    <property type="term" value="F:protein serine/threonine kinase activity"/>
    <property type="evidence" value="ECO:0007669"/>
    <property type="project" value="UniProtKB-KW"/>
</dbReference>
<dbReference type="GO" id="GO:0004712">
    <property type="term" value="F:protein serine/threonine/tyrosine kinase activity"/>
    <property type="evidence" value="ECO:0007669"/>
    <property type="project" value="UniProtKB-UniRule"/>
</dbReference>
<dbReference type="GO" id="GO:0006109">
    <property type="term" value="P:regulation of carbohydrate metabolic process"/>
    <property type="evidence" value="ECO:0007669"/>
    <property type="project" value="UniProtKB-UniRule"/>
</dbReference>
<dbReference type="CDD" id="cd01918">
    <property type="entry name" value="HprK_C"/>
    <property type="match status" value="1"/>
</dbReference>
<dbReference type="FunFam" id="3.40.50.300:FF:000174">
    <property type="entry name" value="HPr kinase/phosphorylase"/>
    <property type="match status" value="1"/>
</dbReference>
<dbReference type="Gene3D" id="3.40.1390.20">
    <property type="entry name" value="HprK N-terminal domain-like"/>
    <property type="match status" value="1"/>
</dbReference>
<dbReference type="Gene3D" id="3.40.50.300">
    <property type="entry name" value="P-loop containing nucleotide triphosphate hydrolases"/>
    <property type="match status" value="1"/>
</dbReference>
<dbReference type="HAMAP" id="MF_01249">
    <property type="entry name" value="HPr_kinase"/>
    <property type="match status" value="1"/>
</dbReference>
<dbReference type="InterPro" id="IPR003755">
    <property type="entry name" value="HPr(Ser)_kin/Pase"/>
</dbReference>
<dbReference type="InterPro" id="IPR011104">
    <property type="entry name" value="Hpr_kin/Pase_C"/>
</dbReference>
<dbReference type="InterPro" id="IPR011126">
    <property type="entry name" value="Hpr_kin/Pase_Hpr_N"/>
</dbReference>
<dbReference type="InterPro" id="IPR027417">
    <property type="entry name" value="P-loop_NTPase"/>
</dbReference>
<dbReference type="InterPro" id="IPR028979">
    <property type="entry name" value="Ser_kin/Pase_Hpr-like_N_sf"/>
</dbReference>
<dbReference type="NCBIfam" id="TIGR00679">
    <property type="entry name" value="hpr-ser"/>
    <property type="match status" value="1"/>
</dbReference>
<dbReference type="PANTHER" id="PTHR30305:SF1">
    <property type="entry name" value="HPR KINASE_PHOSPHORYLASE"/>
    <property type="match status" value="1"/>
</dbReference>
<dbReference type="PANTHER" id="PTHR30305">
    <property type="entry name" value="PROTEIN YJDM-RELATED"/>
    <property type="match status" value="1"/>
</dbReference>
<dbReference type="Pfam" id="PF07475">
    <property type="entry name" value="Hpr_kinase_C"/>
    <property type="match status" value="1"/>
</dbReference>
<dbReference type="Pfam" id="PF02603">
    <property type="entry name" value="Hpr_kinase_N"/>
    <property type="match status" value="1"/>
</dbReference>
<dbReference type="SUPFAM" id="SSF75138">
    <property type="entry name" value="HprK N-terminal domain-like"/>
    <property type="match status" value="1"/>
</dbReference>
<dbReference type="SUPFAM" id="SSF53795">
    <property type="entry name" value="PEP carboxykinase-like"/>
    <property type="match status" value="1"/>
</dbReference>
<reference key="1">
    <citation type="journal article" date="2010" name="Genome Biol. Evol.">
        <title>Continuing evolution of Burkholderia mallei through genome reduction and large-scale rearrangements.</title>
        <authorList>
            <person name="Losada L."/>
            <person name="Ronning C.M."/>
            <person name="DeShazer D."/>
            <person name="Woods D."/>
            <person name="Fedorova N."/>
            <person name="Kim H.S."/>
            <person name="Shabalina S.A."/>
            <person name="Pearson T.R."/>
            <person name="Brinkac L."/>
            <person name="Tan P."/>
            <person name="Nandi T."/>
            <person name="Crabtree J."/>
            <person name="Badger J."/>
            <person name="Beckstrom-Sternberg S."/>
            <person name="Saqib M."/>
            <person name="Schutzer S.E."/>
            <person name="Keim P."/>
            <person name="Nierman W.C."/>
        </authorList>
    </citation>
    <scope>NUCLEOTIDE SEQUENCE [LARGE SCALE GENOMIC DNA]</scope>
    <source>
        <strain>NCTC 10247</strain>
    </source>
</reference>
<proteinExistence type="inferred from homology"/>
<name>HPRK_BURM7</name>
<comment type="function">
    <text evidence="1">Catalyzes the ATP- as well as the pyrophosphate-dependent phosphorylation of a specific serine residue in HPr, a phosphocarrier protein of the phosphoenolpyruvate-dependent sugar phosphotransferase system (PTS). HprK/P also catalyzes the pyrophosphate-producing, inorganic phosphate-dependent dephosphorylation (phosphorolysis) of seryl-phosphorylated HPr (P-Ser-HPr).</text>
</comment>
<comment type="catalytic activity">
    <reaction evidence="1">
        <text>[HPr protein]-L-serine + ATP = [HPr protein]-O-phospho-L-serine + ADP + H(+)</text>
        <dbReference type="Rhea" id="RHEA:46600"/>
        <dbReference type="Rhea" id="RHEA-COMP:11602"/>
        <dbReference type="Rhea" id="RHEA-COMP:11603"/>
        <dbReference type="ChEBI" id="CHEBI:15378"/>
        <dbReference type="ChEBI" id="CHEBI:29999"/>
        <dbReference type="ChEBI" id="CHEBI:30616"/>
        <dbReference type="ChEBI" id="CHEBI:83421"/>
        <dbReference type="ChEBI" id="CHEBI:456216"/>
    </reaction>
</comment>
<comment type="catalytic activity">
    <reaction evidence="1">
        <text>[HPr protein]-O-phospho-L-serine + phosphate + H(+) = [HPr protein]-L-serine + diphosphate</text>
        <dbReference type="Rhea" id="RHEA:46604"/>
        <dbReference type="Rhea" id="RHEA-COMP:11602"/>
        <dbReference type="Rhea" id="RHEA-COMP:11603"/>
        <dbReference type="ChEBI" id="CHEBI:15378"/>
        <dbReference type="ChEBI" id="CHEBI:29999"/>
        <dbReference type="ChEBI" id="CHEBI:33019"/>
        <dbReference type="ChEBI" id="CHEBI:43474"/>
        <dbReference type="ChEBI" id="CHEBI:83421"/>
    </reaction>
</comment>
<comment type="cofactor">
    <cofactor evidence="1">
        <name>Mg(2+)</name>
        <dbReference type="ChEBI" id="CHEBI:18420"/>
    </cofactor>
</comment>
<comment type="subunit">
    <text evidence="1">Homohexamer.</text>
</comment>
<comment type="domain">
    <text evidence="1">The Walker A ATP-binding motif also binds Pi and PPi.</text>
</comment>
<comment type="miscellaneous">
    <text evidence="1">Both phosphorylation and phosphorolysis are carried out by the same active site and suggest a common mechanism for both reactions.</text>
</comment>
<comment type="similarity">
    <text evidence="1">Belongs to the HPrK/P family.</text>
</comment>
<organism>
    <name type="scientific">Burkholderia mallei (strain NCTC 10247)</name>
    <dbReference type="NCBI Taxonomy" id="320389"/>
    <lineage>
        <taxon>Bacteria</taxon>
        <taxon>Pseudomonadati</taxon>
        <taxon>Pseudomonadota</taxon>
        <taxon>Betaproteobacteria</taxon>
        <taxon>Burkholderiales</taxon>
        <taxon>Burkholderiaceae</taxon>
        <taxon>Burkholderia</taxon>
        <taxon>pseudomallei group</taxon>
    </lineage>
</organism>
<sequence length="322" mass="35165">MDTSSINAQSIFDDNAAMLKLSWLTGHEGWERGFSADTVANATSSADLVGHLNLIHPNRIQVLGEAEIDYYQRQTDEDRSRHMAELIALEPPFLVVAGGAAAPPELVLRCTRSSTPLFTTPMSAAAVIDSLRLYMSRILAPRATLHGVFLDILGMGVLLTGDSGLGKSELGLELISRGHGLVADDAVDFVRLGPDFVEGRCPPLLQNLLEVRGLGLLDIKTIFGETAVRRKMKLKLIVQLVRRPDGEFQRLPLESQTVDVLGLPISKVTIQVAAGRNLAVLVEAAVRNTILQLRGIDTLRDFMDRQRLAMQDPDSQFPGKLV</sequence>
<gene>
    <name evidence="1" type="primary">hprK</name>
    <name type="ordered locus">BMA10247_2939</name>
</gene>
<evidence type="ECO:0000255" key="1">
    <source>
        <dbReference type="HAMAP-Rule" id="MF_01249"/>
    </source>
</evidence>
<keyword id="KW-0067">ATP-binding</keyword>
<keyword id="KW-0418">Kinase</keyword>
<keyword id="KW-0460">Magnesium</keyword>
<keyword id="KW-0479">Metal-binding</keyword>
<keyword id="KW-0511">Multifunctional enzyme</keyword>
<keyword id="KW-0547">Nucleotide-binding</keyword>
<keyword id="KW-0723">Serine/threonine-protein kinase</keyword>
<keyword id="KW-0808">Transferase</keyword>
<protein>
    <recommendedName>
        <fullName evidence="1">HPr kinase/phosphorylase</fullName>
        <shortName evidence="1">HPrK/P</shortName>
        <ecNumber evidence="1">2.7.11.-</ecNumber>
        <ecNumber evidence="1">2.7.4.-</ecNumber>
    </recommendedName>
    <alternativeName>
        <fullName evidence="1">HPr(Ser) kinase/phosphorylase</fullName>
    </alternativeName>
</protein>
<accession>A3MQC3</accession>
<feature type="chain" id="PRO_1000067130" description="HPr kinase/phosphorylase">
    <location>
        <begin position="1"/>
        <end position="322"/>
    </location>
</feature>
<feature type="region of interest" description="Important for the catalytic mechanism of both phosphorylation and dephosphorylation" evidence="1">
    <location>
        <begin position="209"/>
        <end position="218"/>
    </location>
</feature>
<feature type="region of interest" description="Important for the catalytic mechanism of dephosphorylation" evidence="1">
    <location>
        <begin position="271"/>
        <end position="276"/>
    </location>
</feature>
<feature type="active site" evidence="1">
    <location>
        <position position="146"/>
    </location>
</feature>
<feature type="active site" evidence="1">
    <location>
        <position position="167"/>
    </location>
</feature>
<feature type="active site" description="Proton acceptor; for phosphorylation activity. Proton donor; for dephosphorylation activity" evidence="1">
    <location>
        <position position="185"/>
    </location>
</feature>
<feature type="active site" evidence="1">
    <location>
        <position position="250"/>
    </location>
</feature>
<feature type="binding site" evidence="1">
    <location>
        <begin position="161"/>
        <end position="168"/>
    </location>
    <ligand>
        <name>ATP</name>
        <dbReference type="ChEBI" id="CHEBI:30616"/>
    </ligand>
</feature>
<feature type="binding site" evidence="1">
    <location>
        <position position="168"/>
    </location>
    <ligand>
        <name>Mg(2+)</name>
        <dbReference type="ChEBI" id="CHEBI:18420"/>
    </ligand>
</feature>
<feature type="binding site" evidence="1">
    <location>
        <position position="210"/>
    </location>
    <ligand>
        <name>Mg(2+)</name>
        <dbReference type="ChEBI" id="CHEBI:18420"/>
    </ligand>
</feature>